<feature type="chain" id="PRO_0000299390" description="OCIA domain-containing protein 1">
    <location>
        <begin position="1"/>
        <end position="260"/>
    </location>
</feature>
<feature type="domain" description="OCIA">
    <location>
        <begin position="1"/>
        <end position="110"/>
    </location>
</feature>
<feature type="region of interest" description="Disordered" evidence="1">
    <location>
        <begin position="146"/>
        <end position="260"/>
    </location>
</feature>
<feature type="compositionally biased region" description="Polar residues" evidence="1">
    <location>
        <begin position="155"/>
        <end position="164"/>
    </location>
</feature>
<feature type="compositionally biased region" description="Basic and acidic residues" evidence="1">
    <location>
        <begin position="205"/>
        <end position="215"/>
    </location>
</feature>
<dbReference type="EMBL" id="CM000071">
    <property type="protein sequence ID" value="EAL26472.1"/>
    <property type="molecule type" value="Genomic_DNA"/>
</dbReference>
<dbReference type="RefSeq" id="XP_001361893.1">
    <property type="nucleotide sequence ID" value="XM_001361856.3"/>
</dbReference>
<dbReference type="FunCoup" id="Q28X44">
    <property type="interactions" value="2104"/>
</dbReference>
<dbReference type="STRING" id="46245.Q28X44"/>
<dbReference type="EnsemblMetazoa" id="FBtr0280233">
    <property type="protein sequence ID" value="FBpp0278671"/>
    <property type="gene ID" value="FBgn0072394"/>
</dbReference>
<dbReference type="KEGG" id="dpo:4805499"/>
<dbReference type="CTD" id="37637"/>
<dbReference type="eggNOG" id="ENOG502RXQR">
    <property type="taxonomic scope" value="Eukaryota"/>
</dbReference>
<dbReference type="HOGENOM" id="CLU_083038_0_0_1"/>
<dbReference type="InParanoid" id="Q28X44"/>
<dbReference type="OMA" id="TYEVMLP"/>
<dbReference type="PhylomeDB" id="Q28X44"/>
<dbReference type="Proteomes" id="UP000001819">
    <property type="component" value="Chromosome 3"/>
</dbReference>
<dbReference type="Bgee" id="FBgn0072394">
    <property type="expression patterns" value="Expressed in female reproductive system and 3 other cell types or tissues"/>
</dbReference>
<dbReference type="GO" id="GO:0005768">
    <property type="term" value="C:endosome"/>
    <property type="evidence" value="ECO:0007669"/>
    <property type="project" value="TreeGrafter"/>
</dbReference>
<dbReference type="InterPro" id="IPR040187">
    <property type="entry name" value="OCAD1/2"/>
</dbReference>
<dbReference type="InterPro" id="IPR009764">
    <property type="entry name" value="OCIA_dom"/>
</dbReference>
<dbReference type="PANTHER" id="PTHR13336:SF3">
    <property type="entry name" value="OCIA DOMAIN-CONTAINING PROTEIN 1"/>
    <property type="match status" value="1"/>
</dbReference>
<dbReference type="PANTHER" id="PTHR13336">
    <property type="entry name" value="OVARIAN CARCINOMA IMMUNOREACTIVE ANTIGEN"/>
    <property type="match status" value="1"/>
</dbReference>
<dbReference type="Pfam" id="PF07051">
    <property type="entry name" value="OCIA"/>
    <property type="match status" value="1"/>
</dbReference>
<sequence>MDSPLSDGSRPPQQQNLHPLADYQFSAEEVKALRECNTESFLQRSLPFGTGLGLLAYFGVKNGYLQGNGKYGAVPKVVMGVILGYFVGKFSYQQKCAEKIMRLPNSRLGEVLRQRRQGGGVINTISPDESLTRAFTLAPFSPSSADVYTDEGLNPSRSTALNLDTESRPTLAGLDDIYRPSLDSSGQMMDTELPLEPAKPGQTYEDLRKKNREGYATHQQSPYSKPYEPQAPVRQRLVEPAPEAATGRPNKNKYGDSWQD</sequence>
<name>OCAD1_DROPS</name>
<comment type="similarity">
    <text evidence="2">Belongs to the OCIAD1 family.</text>
</comment>
<keyword id="KW-1185">Reference proteome</keyword>
<reference key="1">
    <citation type="journal article" date="2005" name="Genome Res.">
        <title>Comparative genome sequencing of Drosophila pseudoobscura: chromosomal, gene, and cis-element evolution.</title>
        <authorList>
            <person name="Richards S."/>
            <person name="Liu Y."/>
            <person name="Bettencourt B.R."/>
            <person name="Hradecky P."/>
            <person name="Letovsky S."/>
            <person name="Nielsen R."/>
            <person name="Thornton K."/>
            <person name="Hubisz M.J."/>
            <person name="Chen R."/>
            <person name="Meisel R.P."/>
            <person name="Couronne O."/>
            <person name="Hua S."/>
            <person name="Smith M.A."/>
            <person name="Zhang P."/>
            <person name="Liu J."/>
            <person name="Bussemaker H.J."/>
            <person name="van Batenburg M.F."/>
            <person name="Howells S.L."/>
            <person name="Scherer S.E."/>
            <person name="Sodergren E."/>
            <person name="Matthews B.B."/>
            <person name="Crosby M.A."/>
            <person name="Schroeder A.J."/>
            <person name="Ortiz-Barrientos D."/>
            <person name="Rives C.M."/>
            <person name="Metzker M.L."/>
            <person name="Muzny D.M."/>
            <person name="Scott G."/>
            <person name="Steffen D."/>
            <person name="Wheeler D.A."/>
            <person name="Worley K.C."/>
            <person name="Havlak P."/>
            <person name="Durbin K.J."/>
            <person name="Egan A."/>
            <person name="Gill R."/>
            <person name="Hume J."/>
            <person name="Morgan M.B."/>
            <person name="Miner G."/>
            <person name="Hamilton C."/>
            <person name="Huang Y."/>
            <person name="Waldron L."/>
            <person name="Verduzco D."/>
            <person name="Clerc-Blankenburg K.P."/>
            <person name="Dubchak I."/>
            <person name="Noor M.A.F."/>
            <person name="Anderson W."/>
            <person name="White K.P."/>
            <person name="Clark A.G."/>
            <person name="Schaeffer S.W."/>
            <person name="Gelbart W.M."/>
            <person name="Weinstock G.M."/>
            <person name="Gibbs R.A."/>
        </authorList>
    </citation>
    <scope>NUCLEOTIDE SEQUENCE [LARGE SCALE GENOMIC DNA]</scope>
    <source>
        <strain>MV2-25 / Tucson 14011-0121.94</strain>
    </source>
</reference>
<gene>
    <name type="ORF">GA12348</name>
</gene>
<organism>
    <name type="scientific">Drosophila pseudoobscura pseudoobscura</name>
    <name type="common">Fruit fly</name>
    <dbReference type="NCBI Taxonomy" id="46245"/>
    <lineage>
        <taxon>Eukaryota</taxon>
        <taxon>Metazoa</taxon>
        <taxon>Ecdysozoa</taxon>
        <taxon>Arthropoda</taxon>
        <taxon>Hexapoda</taxon>
        <taxon>Insecta</taxon>
        <taxon>Pterygota</taxon>
        <taxon>Neoptera</taxon>
        <taxon>Endopterygota</taxon>
        <taxon>Diptera</taxon>
        <taxon>Brachycera</taxon>
        <taxon>Muscomorpha</taxon>
        <taxon>Ephydroidea</taxon>
        <taxon>Drosophilidae</taxon>
        <taxon>Drosophila</taxon>
        <taxon>Sophophora</taxon>
    </lineage>
</organism>
<evidence type="ECO:0000256" key="1">
    <source>
        <dbReference type="SAM" id="MobiDB-lite"/>
    </source>
</evidence>
<evidence type="ECO:0000305" key="2"/>
<protein>
    <recommendedName>
        <fullName>OCIA domain-containing protein 1</fullName>
    </recommendedName>
</protein>
<proteinExistence type="inferred from homology"/>
<accession>Q28X44</accession>